<proteinExistence type="inferred from homology"/>
<organism>
    <name type="scientific">Paracoccus denitrificans (strain Pd 1222)</name>
    <dbReference type="NCBI Taxonomy" id="318586"/>
    <lineage>
        <taxon>Bacteria</taxon>
        <taxon>Pseudomonadati</taxon>
        <taxon>Pseudomonadota</taxon>
        <taxon>Alphaproteobacteria</taxon>
        <taxon>Rhodobacterales</taxon>
        <taxon>Paracoccaceae</taxon>
        <taxon>Paracoccus</taxon>
    </lineage>
</organism>
<accession>A1B3F9</accession>
<protein>
    <recommendedName>
        <fullName evidence="1">UDP-N-acetylglucosamine 1-carboxyvinyltransferase</fullName>
        <ecNumber evidence="1">2.5.1.7</ecNumber>
    </recommendedName>
    <alternativeName>
        <fullName evidence="1">Enoylpyruvate transferase</fullName>
    </alternativeName>
    <alternativeName>
        <fullName evidence="1">UDP-N-acetylglucosamine enolpyruvyl transferase</fullName>
        <shortName evidence="1">EPT</shortName>
    </alternativeName>
</protein>
<sequence>MDQIIVRGNGPLKGEIPITGAKNACLALMPATLLTDQPLTLTNAPRLSDIRTMTALLQSLGAEVASLQDGQVLALSSHDLTSHRADYDIVRKMRASILVLGPMLARDGHAVVSLPGGCAIGARPVDLHLRALEAMGADLDLREGYVHAKAPSGGLRGAVIDFPLVSVGATENALMAATLARGTTVINNAAREPEIVDLAECLRRMGAQIEGEGTSTITVEGVQALGGATHPVVTDRIELGTYMLAPAICGGEVECLGGRIDLVAAFCEKLDEAGIEVVETGRGLKVSRKNGRVRAVDVVTEPFPGFPTDLQAQMMALLCTAEGTSVLEEKIFENRFMHAPELARMGARIEVHGGHATVHGVEKLRGAPVMATDLRASVSLILAGLAAEGETIVSRVYHLDRGYEKVVRKLRGVGADIERIKEVADG</sequence>
<reference key="1">
    <citation type="submission" date="2006-12" db="EMBL/GenBank/DDBJ databases">
        <title>Complete sequence of chromosome 1 of Paracoccus denitrificans PD1222.</title>
        <authorList>
            <person name="Copeland A."/>
            <person name="Lucas S."/>
            <person name="Lapidus A."/>
            <person name="Barry K."/>
            <person name="Detter J.C."/>
            <person name="Glavina del Rio T."/>
            <person name="Hammon N."/>
            <person name="Israni S."/>
            <person name="Dalin E."/>
            <person name="Tice H."/>
            <person name="Pitluck S."/>
            <person name="Munk A.C."/>
            <person name="Brettin T."/>
            <person name="Bruce D."/>
            <person name="Han C."/>
            <person name="Tapia R."/>
            <person name="Gilna P."/>
            <person name="Schmutz J."/>
            <person name="Larimer F."/>
            <person name="Land M."/>
            <person name="Hauser L."/>
            <person name="Kyrpides N."/>
            <person name="Lykidis A."/>
            <person name="Spiro S."/>
            <person name="Richardson D.J."/>
            <person name="Moir J.W.B."/>
            <person name="Ferguson S.J."/>
            <person name="van Spanning R.J.M."/>
            <person name="Richardson P."/>
        </authorList>
    </citation>
    <scope>NUCLEOTIDE SEQUENCE [LARGE SCALE GENOMIC DNA]</scope>
    <source>
        <strain>Pd 1222</strain>
    </source>
</reference>
<comment type="function">
    <text evidence="1">Cell wall formation. Adds enolpyruvyl to UDP-N-acetylglucosamine.</text>
</comment>
<comment type="catalytic activity">
    <reaction evidence="1">
        <text>phosphoenolpyruvate + UDP-N-acetyl-alpha-D-glucosamine = UDP-N-acetyl-3-O-(1-carboxyvinyl)-alpha-D-glucosamine + phosphate</text>
        <dbReference type="Rhea" id="RHEA:18681"/>
        <dbReference type="ChEBI" id="CHEBI:43474"/>
        <dbReference type="ChEBI" id="CHEBI:57705"/>
        <dbReference type="ChEBI" id="CHEBI:58702"/>
        <dbReference type="ChEBI" id="CHEBI:68483"/>
        <dbReference type="EC" id="2.5.1.7"/>
    </reaction>
</comment>
<comment type="pathway">
    <text evidence="1">Cell wall biogenesis; peptidoglycan biosynthesis.</text>
</comment>
<comment type="subcellular location">
    <subcellularLocation>
        <location evidence="1">Cytoplasm</location>
    </subcellularLocation>
</comment>
<comment type="similarity">
    <text evidence="1">Belongs to the EPSP synthase family. MurA subfamily.</text>
</comment>
<dbReference type="EC" id="2.5.1.7" evidence="1"/>
<dbReference type="EMBL" id="CP000489">
    <property type="protein sequence ID" value="ABL70053.1"/>
    <property type="molecule type" value="Genomic_DNA"/>
</dbReference>
<dbReference type="RefSeq" id="WP_011748250.1">
    <property type="nucleotide sequence ID" value="NC_008686.1"/>
</dbReference>
<dbReference type="SMR" id="A1B3F9"/>
<dbReference type="STRING" id="318586.Pden_1961"/>
<dbReference type="EnsemblBacteria" id="ABL70053">
    <property type="protein sequence ID" value="ABL70053"/>
    <property type="gene ID" value="Pden_1961"/>
</dbReference>
<dbReference type="GeneID" id="93450361"/>
<dbReference type="KEGG" id="pde:Pden_1961"/>
<dbReference type="eggNOG" id="COG0766">
    <property type="taxonomic scope" value="Bacteria"/>
</dbReference>
<dbReference type="HOGENOM" id="CLU_027387_0_0_5"/>
<dbReference type="OrthoDB" id="9803760at2"/>
<dbReference type="UniPathway" id="UPA00219"/>
<dbReference type="Proteomes" id="UP000000361">
    <property type="component" value="Chromosome 1"/>
</dbReference>
<dbReference type="GO" id="GO:0005737">
    <property type="term" value="C:cytoplasm"/>
    <property type="evidence" value="ECO:0007669"/>
    <property type="project" value="UniProtKB-SubCell"/>
</dbReference>
<dbReference type="GO" id="GO:0008760">
    <property type="term" value="F:UDP-N-acetylglucosamine 1-carboxyvinyltransferase activity"/>
    <property type="evidence" value="ECO:0007669"/>
    <property type="project" value="UniProtKB-UniRule"/>
</dbReference>
<dbReference type="GO" id="GO:0051301">
    <property type="term" value="P:cell division"/>
    <property type="evidence" value="ECO:0007669"/>
    <property type="project" value="UniProtKB-KW"/>
</dbReference>
<dbReference type="GO" id="GO:0071555">
    <property type="term" value="P:cell wall organization"/>
    <property type="evidence" value="ECO:0007669"/>
    <property type="project" value="UniProtKB-KW"/>
</dbReference>
<dbReference type="GO" id="GO:0009252">
    <property type="term" value="P:peptidoglycan biosynthetic process"/>
    <property type="evidence" value="ECO:0007669"/>
    <property type="project" value="UniProtKB-UniRule"/>
</dbReference>
<dbReference type="GO" id="GO:0008360">
    <property type="term" value="P:regulation of cell shape"/>
    <property type="evidence" value="ECO:0007669"/>
    <property type="project" value="UniProtKB-KW"/>
</dbReference>
<dbReference type="GO" id="GO:0019277">
    <property type="term" value="P:UDP-N-acetylgalactosamine biosynthetic process"/>
    <property type="evidence" value="ECO:0007669"/>
    <property type="project" value="InterPro"/>
</dbReference>
<dbReference type="CDD" id="cd01555">
    <property type="entry name" value="UdpNAET"/>
    <property type="match status" value="1"/>
</dbReference>
<dbReference type="FunFam" id="3.65.10.10:FF:000001">
    <property type="entry name" value="UDP-N-acetylglucosamine 1-carboxyvinyltransferase"/>
    <property type="match status" value="1"/>
</dbReference>
<dbReference type="Gene3D" id="3.65.10.10">
    <property type="entry name" value="Enolpyruvate transferase domain"/>
    <property type="match status" value="2"/>
</dbReference>
<dbReference type="HAMAP" id="MF_00111">
    <property type="entry name" value="MurA"/>
    <property type="match status" value="1"/>
</dbReference>
<dbReference type="InterPro" id="IPR001986">
    <property type="entry name" value="Enolpyruvate_Tfrase_dom"/>
</dbReference>
<dbReference type="InterPro" id="IPR036968">
    <property type="entry name" value="Enolpyruvate_Tfrase_sf"/>
</dbReference>
<dbReference type="InterPro" id="IPR050068">
    <property type="entry name" value="MurA_subfamily"/>
</dbReference>
<dbReference type="InterPro" id="IPR013792">
    <property type="entry name" value="RNA3'P_cycl/enolpyr_Trfase_a/b"/>
</dbReference>
<dbReference type="InterPro" id="IPR005750">
    <property type="entry name" value="UDP_GlcNAc_COvinyl_MurA"/>
</dbReference>
<dbReference type="NCBIfam" id="TIGR01072">
    <property type="entry name" value="murA"/>
    <property type="match status" value="1"/>
</dbReference>
<dbReference type="NCBIfam" id="NF006873">
    <property type="entry name" value="PRK09369.1"/>
    <property type="match status" value="1"/>
</dbReference>
<dbReference type="PANTHER" id="PTHR43783">
    <property type="entry name" value="UDP-N-ACETYLGLUCOSAMINE 1-CARBOXYVINYLTRANSFERASE"/>
    <property type="match status" value="1"/>
</dbReference>
<dbReference type="PANTHER" id="PTHR43783:SF1">
    <property type="entry name" value="UDP-N-ACETYLGLUCOSAMINE 1-CARBOXYVINYLTRANSFERASE"/>
    <property type="match status" value="1"/>
</dbReference>
<dbReference type="Pfam" id="PF00275">
    <property type="entry name" value="EPSP_synthase"/>
    <property type="match status" value="1"/>
</dbReference>
<dbReference type="SUPFAM" id="SSF55205">
    <property type="entry name" value="EPT/RTPC-like"/>
    <property type="match status" value="1"/>
</dbReference>
<gene>
    <name evidence="1" type="primary">murA</name>
    <name type="ordered locus">Pden_1961</name>
</gene>
<evidence type="ECO:0000255" key="1">
    <source>
        <dbReference type="HAMAP-Rule" id="MF_00111"/>
    </source>
</evidence>
<name>MURA_PARDP</name>
<keyword id="KW-0131">Cell cycle</keyword>
<keyword id="KW-0132">Cell division</keyword>
<keyword id="KW-0133">Cell shape</keyword>
<keyword id="KW-0961">Cell wall biogenesis/degradation</keyword>
<keyword id="KW-0963">Cytoplasm</keyword>
<keyword id="KW-0573">Peptidoglycan synthesis</keyword>
<keyword id="KW-0670">Pyruvate</keyword>
<keyword id="KW-1185">Reference proteome</keyword>
<keyword id="KW-0808">Transferase</keyword>
<feature type="chain" id="PRO_1000023063" description="UDP-N-acetylglucosamine 1-carboxyvinyltransferase">
    <location>
        <begin position="1"/>
        <end position="426"/>
    </location>
</feature>
<feature type="active site" description="Proton donor" evidence="1">
    <location>
        <position position="118"/>
    </location>
</feature>
<feature type="binding site" evidence="1">
    <location>
        <begin position="22"/>
        <end position="23"/>
    </location>
    <ligand>
        <name>phosphoenolpyruvate</name>
        <dbReference type="ChEBI" id="CHEBI:58702"/>
    </ligand>
</feature>
<feature type="binding site" evidence="1">
    <location>
        <position position="94"/>
    </location>
    <ligand>
        <name>UDP-N-acetyl-alpha-D-glucosamine</name>
        <dbReference type="ChEBI" id="CHEBI:57705"/>
    </ligand>
</feature>
<feature type="binding site" evidence="1">
    <location>
        <begin position="123"/>
        <end position="127"/>
    </location>
    <ligand>
        <name>UDP-N-acetyl-alpha-D-glucosamine</name>
        <dbReference type="ChEBI" id="CHEBI:57705"/>
    </ligand>
</feature>
<feature type="binding site" evidence="1">
    <location>
        <position position="309"/>
    </location>
    <ligand>
        <name>UDP-N-acetyl-alpha-D-glucosamine</name>
        <dbReference type="ChEBI" id="CHEBI:57705"/>
    </ligand>
</feature>
<feature type="binding site" evidence="1">
    <location>
        <position position="331"/>
    </location>
    <ligand>
        <name>UDP-N-acetyl-alpha-D-glucosamine</name>
        <dbReference type="ChEBI" id="CHEBI:57705"/>
    </ligand>
</feature>
<feature type="modified residue" description="2-(S-cysteinyl)pyruvic acid O-phosphothioketal" evidence="1">
    <location>
        <position position="118"/>
    </location>
</feature>